<accession>Q8DVB6</accession>
<name>LYTS_STRMU</name>
<comment type="function">
    <text evidence="1">Member of the two-component regulatory system LytR/LytS that probably regulates genes involved in cell wall metabolism.</text>
</comment>
<comment type="catalytic activity">
    <reaction>
        <text>ATP + protein L-histidine = ADP + protein N-phospho-L-histidine.</text>
        <dbReference type="EC" id="2.7.13.3"/>
    </reaction>
</comment>
<comment type="subcellular location">
    <subcellularLocation>
        <location evidence="1">Cell membrane</location>
        <topology evidence="1">Multi-pass membrane protein</topology>
    </subcellularLocation>
</comment>
<reference key="1">
    <citation type="journal article" date="2002" name="Proc. Natl. Acad. Sci. U.S.A.">
        <title>Genome sequence of Streptococcus mutans UA159, a cariogenic dental pathogen.</title>
        <authorList>
            <person name="Ajdic D.J."/>
            <person name="McShan W.M."/>
            <person name="McLaughlin R.E."/>
            <person name="Savic G."/>
            <person name="Chang J."/>
            <person name="Carson M.B."/>
            <person name="Primeaux C."/>
            <person name="Tian R."/>
            <person name="Kenton S."/>
            <person name="Jia H.G."/>
            <person name="Lin S.P."/>
            <person name="Qian Y."/>
            <person name="Li S."/>
            <person name="Zhu H."/>
            <person name="Najar F.Z."/>
            <person name="Lai H."/>
            <person name="White J."/>
            <person name="Roe B.A."/>
            <person name="Ferretti J.J."/>
        </authorList>
    </citation>
    <scope>NUCLEOTIDE SEQUENCE [LARGE SCALE GENOMIC DNA]</scope>
    <source>
        <strain>ATCC 700610 / UA159</strain>
    </source>
</reference>
<organism>
    <name type="scientific">Streptococcus mutans serotype c (strain ATCC 700610 / UA159)</name>
    <dbReference type="NCBI Taxonomy" id="210007"/>
    <lineage>
        <taxon>Bacteria</taxon>
        <taxon>Bacillati</taxon>
        <taxon>Bacillota</taxon>
        <taxon>Bacilli</taxon>
        <taxon>Lactobacillales</taxon>
        <taxon>Streptococcaceae</taxon>
        <taxon>Streptococcus</taxon>
    </lineage>
</organism>
<feature type="chain" id="PRO_0000074803" description="Sensor protein LytS">
    <location>
        <begin position="1"/>
        <end position="580"/>
    </location>
</feature>
<feature type="transmembrane region" description="Helical" evidence="2">
    <location>
        <begin position="4"/>
        <end position="26"/>
    </location>
</feature>
<feature type="transmembrane region" description="Helical" evidence="2">
    <location>
        <begin position="39"/>
        <end position="61"/>
    </location>
</feature>
<feature type="transmembrane region" description="Helical" evidence="2">
    <location>
        <begin position="86"/>
        <end position="108"/>
    </location>
</feature>
<feature type="transmembrane region" description="Helical" evidence="2">
    <location>
        <begin position="115"/>
        <end position="137"/>
    </location>
</feature>
<feature type="transmembrane region" description="Helical" evidence="2">
    <location>
        <begin position="152"/>
        <end position="169"/>
    </location>
</feature>
<feature type="transmembrane region" description="Helical" evidence="2">
    <location>
        <begin position="176"/>
        <end position="198"/>
    </location>
</feature>
<feature type="domain" description="Histidine kinase">
    <location>
        <begin position="356"/>
        <end position="571"/>
    </location>
</feature>
<feature type="modified residue" description="Phosphohistidine; by autocatalysis" evidence="1">
    <location>
        <position position="383"/>
    </location>
</feature>
<evidence type="ECO:0000250" key="1"/>
<evidence type="ECO:0000255" key="2"/>
<gene>
    <name type="primary">lytS</name>
    <name type="ordered locus">SMU_577</name>
</gene>
<dbReference type="EC" id="2.7.13.3"/>
<dbReference type="EMBL" id="AE014133">
    <property type="protein sequence ID" value="AAN58318.1"/>
    <property type="molecule type" value="Genomic_DNA"/>
</dbReference>
<dbReference type="RefSeq" id="NP_721012.1">
    <property type="nucleotide sequence ID" value="NC_004350.2"/>
</dbReference>
<dbReference type="RefSeq" id="WP_002262109.1">
    <property type="nucleotide sequence ID" value="NC_004350.2"/>
</dbReference>
<dbReference type="SMR" id="Q8DVB6"/>
<dbReference type="STRING" id="210007.SMU_577"/>
<dbReference type="KEGG" id="smu:SMU_577"/>
<dbReference type="PATRIC" id="fig|210007.7.peg.512"/>
<dbReference type="eggNOG" id="COG3275">
    <property type="taxonomic scope" value="Bacteria"/>
</dbReference>
<dbReference type="HOGENOM" id="CLU_020473_3_3_9"/>
<dbReference type="OrthoDB" id="9776552at2"/>
<dbReference type="PhylomeDB" id="Q8DVB6"/>
<dbReference type="PHI-base" id="PHI:10257"/>
<dbReference type="Proteomes" id="UP000002512">
    <property type="component" value="Chromosome"/>
</dbReference>
<dbReference type="GO" id="GO:0005886">
    <property type="term" value="C:plasma membrane"/>
    <property type="evidence" value="ECO:0007669"/>
    <property type="project" value="UniProtKB-SubCell"/>
</dbReference>
<dbReference type="GO" id="GO:0005524">
    <property type="term" value="F:ATP binding"/>
    <property type="evidence" value="ECO:0007669"/>
    <property type="project" value="UniProtKB-KW"/>
</dbReference>
<dbReference type="GO" id="GO:0000155">
    <property type="term" value="F:phosphorelay sensor kinase activity"/>
    <property type="evidence" value="ECO:0007669"/>
    <property type="project" value="InterPro"/>
</dbReference>
<dbReference type="GO" id="GO:0071555">
    <property type="term" value="P:cell wall organization"/>
    <property type="evidence" value="ECO:0007669"/>
    <property type="project" value="InterPro"/>
</dbReference>
<dbReference type="Gene3D" id="3.30.450.40">
    <property type="match status" value="1"/>
</dbReference>
<dbReference type="Gene3D" id="3.30.565.10">
    <property type="entry name" value="Histidine kinase-like ATPase, C-terminal domain"/>
    <property type="match status" value="1"/>
</dbReference>
<dbReference type="InterPro" id="IPR050640">
    <property type="entry name" value="Bact_2-comp_sensor_kinase"/>
</dbReference>
<dbReference type="InterPro" id="IPR029016">
    <property type="entry name" value="GAF-like_dom_sf"/>
</dbReference>
<dbReference type="InterPro" id="IPR036890">
    <property type="entry name" value="HATPase_C_sf"/>
</dbReference>
<dbReference type="InterPro" id="IPR010559">
    <property type="entry name" value="Sig_transdc_His_kin_internal"/>
</dbReference>
<dbReference type="InterPro" id="IPR011620">
    <property type="entry name" value="Sig_transdc_His_kinase_LytS_TM"/>
</dbReference>
<dbReference type="PANTHER" id="PTHR34220">
    <property type="entry name" value="SENSOR HISTIDINE KINASE YPDA"/>
    <property type="match status" value="1"/>
</dbReference>
<dbReference type="PANTHER" id="PTHR34220:SF7">
    <property type="entry name" value="SENSOR HISTIDINE KINASE YPDA"/>
    <property type="match status" value="1"/>
</dbReference>
<dbReference type="Pfam" id="PF07694">
    <property type="entry name" value="5TM-5TMR_LYT"/>
    <property type="match status" value="1"/>
</dbReference>
<dbReference type="Pfam" id="PF02518">
    <property type="entry name" value="HATPase_c"/>
    <property type="match status" value="1"/>
</dbReference>
<dbReference type="Pfam" id="PF06580">
    <property type="entry name" value="His_kinase"/>
    <property type="match status" value="1"/>
</dbReference>
<dbReference type="SMART" id="SM00387">
    <property type="entry name" value="HATPase_c"/>
    <property type="match status" value="1"/>
</dbReference>
<dbReference type="SUPFAM" id="SSF55874">
    <property type="entry name" value="ATPase domain of HSP90 chaperone/DNA topoisomerase II/histidine kinase"/>
    <property type="match status" value="1"/>
</dbReference>
<dbReference type="SUPFAM" id="SSF55781">
    <property type="entry name" value="GAF domain-like"/>
    <property type="match status" value="1"/>
</dbReference>
<protein>
    <recommendedName>
        <fullName>Sensor protein LytS</fullName>
        <ecNumber>2.7.13.3</ecNumber>
    </recommendedName>
</protein>
<keyword id="KW-0067">ATP-binding</keyword>
<keyword id="KW-1003">Cell membrane</keyword>
<keyword id="KW-0418">Kinase</keyword>
<keyword id="KW-0472">Membrane</keyword>
<keyword id="KW-0547">Nucleotide-binding</keyword>
<keyword id="KW-0597">Phosphoprotein</keyword>
<keyword id="KW-1185">Reference proteome</keyword>
<keyword id="KW-0808">Transferase</keyword>
<keyword id="KW-0812">Transmembrane</keyword>
<keyword id="KW-1133">Transmembrane helix</keyword>
<keyword id="KW-0902">Two-component regulatory system</keyword>
<proteinExistence type="inferred from homology"/>
<sequence>MLMILLFQRLGIIMILAFLLVNNSYFRQLIEERSKREKLVLIIIFGIFVIISNMTGIEITSDKSLVERPILTTISHSDSLANTRTLVITTASLVGGPLVGTVVGFIGGVHRFFQGNFSGAFYIVSSALVGYISGRLGDQLKTNNLYPSTSQVIVISIIAESIQMLFVGFFTGWDLVKLIFIPMMLLNSLGSTLFLAILKTYLSNERQLRAVQTRDVLDLTQQTLPYLRQGLSQQSATKVCNIIKQHTNFDAVGLTDRTNVLAHIGVGQDHHIAGQAVKTDLSKSVILNGQPQIALDKTAIACPDQSCLLNSAIVVPLKINNETVGALKMYFSGDKKMTEVEENLALGLAQIFSGQLAIGIAEEQNKLANIAEIKALQSQINPHFFFNAINTISALIRLDANKARYALMQLSTFFRTSLQGGQDREISLEQEKAHVDAYMNLEKLRFPDKYQLDYHITVSTKMTLPPFGLQVLVENAVRHAFKERKKDNHICISITDQGEFYKVAVSDNGQGISPNMIDKLGQETVSESKGTGTALVNLNNRLNLLYGSASQLHFDSTDQGTTVWYEIPYQKGDKDEHFNS</sequence>